<proteinExistence type="inferred from homology"/>
<comment type="similarity">
    <text evidence="1">Belongs to the eukaryotic ribosomal protein eL15 family.</text>
</comment>
<protein>
    <recommendedName>
        <fullName evidence="1">Large ribosomal subunit protein eL15</fullName>
    </recommendedName>
    <alternativeName>
        <fullName evidence="3">50S ribosomal protein L15e</fullName>
    </alternativeName>
</protein>
<reference key="1">
    <citation type="submission" date="2007-06" db="EMBL/GenBank/DDBJ databases">
        <title>Complete sequence of Methanococcus aeolicus Nankai-3.</title>
        <authorList>
            <consortium name="US DOE Joint Genome Institute"/>
            <person name="Copeland A."/>
            <person name="Lucas S."/>
            <person name="Lapidus A."/>
            <person name="Barry K."/>
            <person name="Glavina del Rio T."/>
            <person name="Dalin E."/>
            <person name="Tice H."/>
            <person name="Pitluck S."/>
            <person name="Chain P."/>
            <person name="Malfatti S."/>
            <person name="Shin M."/>
            <person name="Vergez L."/>
            <person name="Schmutz J."/>
            <person name="Larimer F."/>
            <person name="Land M."/>
            <person name="Hauser L."/>
            <person name="Kyrpides N."/>
            <person name="Lykidis A."/>
            <person name="Sieprawska-Lupa M."/>
            <person name="Whitman W.B."/>
            <person name="Richardson P."/>
        </authorList>
    </citation>
    <scope>NUCLEOTIDE SEQUENCE [LARGE SCALE GENOMIC DNA]</scope>
    <source>
        <strain>ATCC BAA-1280 / DSM 17508 / OCM 812 / Nankai-3</strain>
    </source>
</reference>
<name>RL15E_META3</name>
<organism>
    <name type="scientific">Methanococcus aeolicus (strain ATCC BAA-1280 / DSM 17508 / OCM 812 / Nankai-3)</name>
    <dbReference type="NCBI Taxonomy" id="419665"/>
    <lineage>
        <taxon>Archaea</taxon>
        <taxon>Methanobacteriati</taxon>
        <taxon>Methanobacteriota</taxon>
        <taxon>Methanomada group</taxon>
        <taxon>Methanococci</taxon>
        <taxon>Methanococcales</taxon>
        <taxon>Methanococcaceae</taxon>
        <taxon>Methanococcus</taxon>
    </lineage>
</organism>
<accession>A6UX54</accession>
<gene>
    <name evidence="1" type="primary">rpl15e</name>
    <name type="ordered locus">Maeo_1500</name>
</gene>
<evidence type="ECO:0000255" key="1">
    <source>
        <dbReference type="HAMAP-Rule" id="MF_00256"/>
    </source>
</evidence>
<evidence type="ECO:0000256" key="2">
    <source>
        <dbReference type="SAM" id="MobiDB-lite"/>
    </source>
</evidence>
<evidence type="ECO:0000305" key="3"/>
<keyword id="KW-0687">Ribonucleoprotein</keyword>
<keyword id="KW-0689">Ribosomal protein</keyword>
<sequence>MSMYKHVKEAWKKPSESYVKGLQWARMQDWRKEPTVVRVEKPTRIDRARSLGYKAKQGVIVARVAVRRGGLRKPRPKHSKKPATMAMNKITMSKSIQRIAEERAAKRYPNLEVLNSYSVGEDGKRKWYEVILIDVNHPSIKNDSSYKNLCTGKHTNRVFRGLTSAGKKGRGLMNKGKGAEKVRPGIRANKKLGK</sequence>
<feature type="chain" id="PRO_1000003424" description="Large ribosomal subunit protein eL15">
    <location>
        <begin position="1"/>
        <end position="194"/>
    </location>
</feature>
<feature type="region of interest" description="Disordered" evidence="2">
    <location>
        <begin position="165"/>
        <end position="194"/>
    </location>
</feature>
<dbReference type="EMBL" id="CP000743">
    <property type="protein sequence ID" value="ABR57076.1"/>
    <property type="molecule type" value="Genomic_DNA"/>
</dbReference>
<dbReference type="RefSeq" id="WP_011974208.1">
    <property type="nucleotide sequence ID" value="NC_009635.1"/>
</dbReference>
<dbReference type="SMR" id="A6UX54"/>
<dbReference type="STRING" id="419665.Maeo_1500"/>
<dbReference type="GeneID" id="5327540"/>
<dbReference type="KEGG" id="mae:Maeo_1500"/>
<dbReference type="eggNOG" id="arCOG04209">
    <property type="taxonomic scope" value="Archaea"/>
</dbReference>
<dbReference type="HOGENOM" id="CLU_080796_1_0_2"/>
<dbReference type="OrthoDB" id="8183at2157"/>
<dbReference type="Proteomes" id="UP000001106">
    <property type="component" value="Chromosome"/>
</dbReference>
<dbReference type="GO" id="GO:0022625">
    <property type="term" value="C:cytosolic large ribosomal subunit"/>
    <property type="evidence" value="ECO:0007669"/>
    <property type="project" value="TreeGrafter"/>
</dbReference>
<dbReference type="GO" id="GO:0003723">
    <property type="term" value="F:RNA binding"/>
    <property type="evidence" value="ECO:0007669"/>
    <property type="project" value="TreeGrafter"/>
</dbReference>
<dbReference type="GO" id="GO:0003735">
    <property type="term" value="F:structural constituent of ribosome"/>
    <property type="evidence" value="ECO:0007669"/>
    <property type="project" value="InterPro"/>
</dbReference>
<dbReference type="GO" id="GO:0002181">
    <property type="term" value="P:cytoplasmic translation"/>
    <property type="evidence" value="ECO:0007669"/>
    <property type="project" value="TreeGrafter"/>
</dbReference>
<dbReference type="FunFam" id="3.40.1120.10:FF:000002">
    <property type="entry name" value="50S ribosomal protein L15e"/>
    <property type="match status" value="1"/>
</dbReference>
<dbReference type="Gene3D" id="3.40.1120.10">
    <property type="entry name" value="Ribosomal protein l15e"/>
    <property type="match status" value="1"/>
</dbReference>
<dbReference type="HAMAP" id="MF_00256">
    <property type="entry name" value="Ribosomal_eL15"/>
    <property type="match status" value="1"/>
</dbReference>
<dbReference type="InterPro" id="IPR024794">
    <property type="entry name" value="Rbsml_eL15_core_dom_sf"/>
</dbReference>
<dbReference type="InterPro" id="IPR000439">
    <property type="entry name" value="Ribosomal_eL15"/>
</dbReference>
<dbReference type="InterPro" id="IPR020926">
    <property type="entry name" value="Ribosomal_eL15_arc"/>
</dbReference>
<dbReference type="InterPro" id="IPR020925">
    <property type="entry name" value="Ribosomal_eL15_CS"/>
</dbReference>
<dbReference type="InterPro" id="IPR012678">
    <property type="entry name" value="Ribosomal_uL23/eL15/eS24_sf"/>
</dbReference>
<dbReference type="NCBIfam" id="NF003269">
    <property type="entry name" value="PRK04243.1"/>
    <property type="match status" value="1"/>
</dbReference>
<dbReference type="PANTHER" id="PTHR11847:SF4">
    <property type="entry name" value="LARGE RIBOSOMAL SUBUNIT PROTEIN EL15"/>
    <property type="match status" value="1"/>
</dbReference>
<dbReference type="PANTHER" id="PTHR11847">
    <property type="entry name" value="RIBOSOMAL PROTEIN L15"/>
    <property type="match status" value="1"/>
</dbReference>
<dbReference type="Pfam" id="PF00827">
    <property type="entry name" value="Ribosomal_L15e"/>
    <property type="match status" value="1"/>
</dbReference>
<dbReference type="SMART" id="SM01384">
    <property type="entry name" value="Ribosomal_L15e"/>
    <property type="match status" value="1"/>
</dbReference>
<dbReference type="SUPFAM" id="SSF54189">
    <property type="entry name" value="Ribosomal proteins S24e, L23 and L15e"/>
    <property type="match status" value="1"/>
</dbReference>
<dbReference type="PROSITE" id="PS01194">
    <property type="entry name" value="RIBOSOMAL_L15E"/>
    <property type="match status" value="1"/>
</dbReference>